<proteinExistence type="evidence at protein level"/>
<evidence type="ECO:0000250" key="1"/>
<evidence type="ECO:0000255" key="2"/>
<evidence type="ECO:0000255" key="3">
    <source>
        <dbReference type="PROSITE-ProRule" id="PRU00159"/>
    </source>
</evidence>
<evidence type="ECO:0000255" key="4">
    <source>
        <dbReference type="PROSITE-ProRule" id="PRU10027"/>
    </source>
</evidence>
<evidence type="ECO:0000256" key="5">
    <source>
        <dbReference type="SAM" id="MobiDB-lite"/>
    </source>
</evidence>
<evidence type="ECO:0000269" key="6">
    <source>
    </source>
</evidence>
<evidence type="ECO:0000305" key="7"/>
<comment type="function">
    <text evidence="6">Required during the differentiation of the protoderm into shoots epidermis and cuticle.</text>
</comment>
<comment type="catalytic activity">
    <reaction evidence="6">
        <text>L-seryl-[protein] + ATP = O-phospho-L-seryl-[protein] + ADP + H(+)</text>
        <dbReference type="Rhea" id="RHEA:17989"/>
        <dbReference type="Rhea" id="RHEA-COMP:9863"/>
        <dbReference type="Rhea" id="RHEA-COMP:11604"/>
        <dbReference type="ChEBI" id="CHEBI:15378"/>
        <dbReference type="ChEBI" id="CHEBI:29999"/>
        <dbReference type="ChEBI" id="CHEBI:30616"/>
        <dbReference type="ChEBI" id="CHEBI:83421"/>
        <dbReference type="ChEBI" id="CHEBI:456216"/>
        <dbReference type="EC" id="2.7.11.1"/>
    </reaction>
</comment>
<comment type="catalytic activity">
    <reaction evidence="6">
        <text>L-threonyl-[protein] + ATP = O-phospho-L-threonyl-[protein] + ADP + H(+)</text>
        <dbReference type="Rhea" id="RHEA:46608"/>
        <dbReference type="Rhea" id="RHEA-COMP:11060"/>
        <dbReference type="Rhea" id="RHEA-COMP:11605"/>
        <dbReference type="ChEBI" id="CHEBI:15378"/>
        <dbReference type="ChEBI" id="CHEBI:30013"/>
        <dbReference type="ChEBI" id="CHEBI:30616"/>
        <dbReference type="ChEBI" id="CHEBI:61977"/>
        <dbReference type="ChEBI" id="CHEBI:456216"/>
        <dbReference type="EC" id="2.7.11.1"/>
    </reaction>
</comment>
<comment type="subcellular location">
    <subcellularLocation>
        <location evidence="1">Cell membrane</location>
        <topology evidence="1">Single-pass type I membrane protein</topology>
    </subcellularLocation>
</comment>
<comment type="PTM">
    <text evidence="6">Autophosphorylated and phosphorylated by ACR4.</text>
</comment>
<comment type="disruption phenotype">
    <text evidence="6">Various epidermal defects, including disorganization of epidermis-related tissues, defects in the leaf cuticle and the fusion of organs.</text>
</comment>
<comment type="similarity">
    <text evidence="3">Belongs to the protein kinase superfamily. Ser/Thr protein kinase family.</text>
</comment>
<comment type="sequence caution" evidence="7">
    <conflict type="erroneous gene model prediction">
        <sequence resource="EMBL-CDS" id="AAD21758"/>
    </conflict>
</comment>
<organism>
    <name type="scientific">Arabidopsis thaliana</name>
    <name type="common">Mouse-ear cress</name>
    <dbReference type="NCBI Taxonomy" id="3702"/>
    <lineage>
        <taxon>Eukaryota</taxon>
        <taxon>Viridiplantae</taxon>
        <taxon>Streptophyta</taxon>
        <taxon>Embryophyta</taxon>
        <taxon>Tracheophyta</taxon>
        <taxon>Spermatophyta</taxon>
        <taxon>Magnoliopsida</taxon>
        <taxon>eudicotyledons</taxon>
        <taxon>Gunneridae</taxon>
        <taxon>Pentapetalae</taxon>
        <taxon>rosids</taxon>
        <taxon>malvids</taxon>
        <taxon>Brassicales</taxon>
        <taxon>Brassicaceae</taxon>
        <taxon>Camelineae</taxon>
        <taxon>Arabidopsis</taxon>
    </lineage>
</organism>
<name>ALE2_ARATH</name>
<dbReference type="EC" id="2.7.11.1"/>
<dbReference type="EMBL" id="AC006569">
    <property type="protein sequence ID" value="AAD21758.1"/>
    <property type="status" value="ALT_SEQ"/>
    <property type="molecule type" value="Genomic_DNA"/>
</dbReference>
<dbReference type="EMBL" id="CP002685">
    <property type="protein sequence ID" value="AEC06991.1"/>
    <property type="molecule type" value="Genomic_DNA"/>
</dbReference>
<dbReference type="EMBL" id="AY091071">
    <property type="protein sequence ID" value="AAM13891.1"/>
    <property type="molecule type" value="mRNA"/>
</dbReference>
<dbReference type="EMBL" id="AY133858">
    <property type="protein sequence ID" value="AAM91792.1"/>
    <property type="molecule type" value="mRNA"/>
</dbReference>
<dbReference type="EMBL" id="AK226880">
    <property type="protein sequence ID" value="BAE98959.1"/>
    <property type="molecule type" value="mRNA"/>
</dbReference>
<dbReference type="PIR" id="E84587">
    <property type="entry name" value="E84587"/>
</dbReference>
<dbReference type="RefSeq" id="NP_849998.1">
    <property type="nucleotide sequence ID" value="NM_179667.3"/>
</dbReference>
<dbReference type="SMR" id="Q8RWW0"/>
<dbReference type="BioGRID" id="1902">
    <property type="interactions" value="28"/>
</dbReference>
<dbReference type="FunCoup" id="Q8RWW0">
    <property type="interactions" value="1180"/>
</dbReference>
<dbReference type="IntAct" id="Q8RWW0">
    <property type="interactions" value="28"/>
</dbReference>
<dbReference type="STRING" id="3702.Q8RWW0"/>
<dbReference type="GlyCosmos" id="Q8RWW0">
    <property type="glycosylation" value="5 sites, No reported glycans"/>
</dbReference>
<dbReference type="GlyGen" id="Q8RWW0">
    <property type="glycosylation" value="6 sites"/>
</dbReference>
<dbReference type="iPTMnet" id="Q8RWW0"/>
<dbReference type="MetOSite" id="Q8RWW0"/>
<dbReference type="PaxDb" id="3702-AT2G20300.1"/>
<dbReference type="ProteomicsDB" id="245046"/>
<dbReference type="EnsemblPlants" id="AT2G20300.1">
    <property type="protein sequence ID" value="AT2G20300.1"/>
    <property type="gene ID" value="AT2G20300"/>
</dbReference>
<dbReference type="GeneID" id="816549"/>
<dbReference type="Gramene" id="AT2G20300.1">
    <property type="protein sequence ID" value="AT2G20300.1"/>
    <property type="gene ID" value="AT2G20300"/>
</dbReference>
<dbReference type="KEGG" id="ath:AT2G20300"/>
<dbReference type="Araport" id="AT2G20300"/>
<dbReference type="TAIR" id="AT2G20300">
    <property type="gene designation" value="ALE2"/>
</dbReference>
<dbReference type="eggNOG" id="KOG1187">
    <property type="taxonomic scope" value="Eukaryota"/>
</dbReference>
<dbReference type="HOGENOM" id="CLU_000288_24_3_1"/>
<dbReference type="InParanoid" id="Q8RWW0"/>
<dbReference type="OMA" id="VVYITYP"/>
<dbReference type="OrthoDB" id="1901798at2759"/>
<dbReference type="PhylomeDB" id="Q8RWW0"/>
<dbReference type="PRO" id="PR:Q8RWW0"/>
<dbReference type="Proteomes" id="UP000006548">
    <property type="component" value="Chromosome 2"/>
</dbReference>
<dbReference type="ExpressionAtlas" id="Q8RWW0">
    <property type="expression patterns" value="baseline and differential"/>
</dbReference>
<dbReference type="GO" id="GO:0005886">
    <property type="term" value="C:plasma membrane"/>
    <property type="evidence" value="ECO:0007669"/>
    <property type="project" value="UniProtKB-SubCell"/>
</dbReference>
<dbReference type="GO" id="GO:0005524">
    <property type="term" value="F:ATP binding"/>
    <property type="evidence" value="ECO:0007669"/>
    <property type="project" value="UniProtKB-KW"/>
</dbReference>
<dbReference type="GO" id="GO:0016301">
    <property type="term" value="F:kinase activity"/>
    <property type="evidence" value="ECO:0000314"/>
    <property type="project" value="TAIR"/>
</dbReference>
<dbReference type="GO" id="GO:0106310">
    <property type="term" value="F:protein serine kinase activity"/>
    <property type="evidence" value="ECO:0007669"/>
    <property type="project" value="RHEA"/>
</dbReference>
<dbReference type="GO" id="GO:0004674">
    <property type="term" value="F:protein serine/threonine kinase activity"/>
    <property type="evidence" value="ECO:0007005"/>
    <property type="project" value="TAIR"/>
</dbReference>
<dbReference type="GO" id="GO:0030154">
    <property type="term" value="P:cell differentiation"/>
    <property type="evidence" value="ECO:0007669"/>
    <property type="project" value="UniProtKB-KW"/>
</dbReference>
<dbReference type="GO" id="GO:0090558">
    <property type="term" value="P:plant epidermis development"/>
    <property type="evidence" value="ECO:0000315"/>
    <property type="project" value="TAIR"/>
</dbReference>
<dbReference type="GO" id="GO:1905393">
    <property type="term" value="P:plant organ formation"/>
    <property type="evidence" value="ECO:0000315"/>
    <property type="project" value="TAIR"/>
</dbReference>
<dbReference type="GO" id="GO:0046777">
    <property type="term" value="P:protein autophosphorylation"/>
    <property type="evidence" value="ECO:0007005"/>
    <property type="project" value="TAIR"/>
</dbReference>
<dbReference type="GO" id="GO:0010068">
    <property type="term" value="P:protoderm histogenesis"/>
    <property type="evidence" value="ECO:0000315"/>
    <property type="project" value="TAIR"/>
</dbReference>
<dbReference type="CDD" id="cd14066">
    <property type="entry name" value="STKc_IRAK"/>
    <property type="match status" value="1"/>
</dbReference>
<dbReference type="FunFam" id="1.10.510.10:FF:000051">
    <property type="entry name" value="Receptor-like serine/threonine-protein kinase ALE2"/>
    <property type="match status" value="1"/>
</dbReference>
<dbReference type="FunFam" id="3.30.200.20:FF:000146">
    <property type="entry name" value="receptor-like serine/threonine-protein kinase ALE2"/>
    <property type="match status" value="1"/>
</dbReference>
<dbReference type="Gene3D" id="3.30.200.20">
    <property type="entry name" value="Phosphorylase Kinase, domain 1"/>
    <property type="match status" value="1"/>
</dbReference>
<dbReference type="Gene3D" id="1.10.510.10">
    <property type="entry name" value="Transferase(Phosphotransferase) domain 1"/>
    <property type="match status" value="1"/>
</dbReference>
<dbReference type="InterPro" id="IPR011009">
    <property type="entry name" value="Kinase-like_dom_sf"/>
</dbReference>
<dbReference type="InterPro" id="IPR000719">
    <property type="entry name" value="Prot_kinase_dom"/>
</dbReference>
<dbReference type="InterPro" id="IPR017441">
    <property type="entry name" value="Protein_kinase_ATP_BS"/>
</dbReference>
<dbReference type="InterPro" id="IPR001245">
    <property type="entry name" value="Ser-Thr/Tyr_kinase_cat_dom"/>
</dbReference>
<dbReference type="InterPro" id="IPR008271">
    <property type="entry name" value="Ser/Thr_kinase_AS"/>
</dbReference>
<dbReference type="PANTHER" id="PTHR47989">
    <property type="entry name" value="OS01G0750732 PROTEIN"/>
    <property type="match status" value="1"/>
</dbReference>
<dbReference type="PANTHER" id="PTHR47989:SF40">
    <property type="entry name" value="RECEPTOR-LIKE SERINE_THREONINE-PROTEIN KINASE ALE2"/>
    <property type="match status" value="1"/>
</dbReference>
<dbReference type="Pfam" id="PF23180">
    <property type="entry name" value="ALE2_N"/>
    <property type="match status" value="1"/>
</dbReference>
<dbReference type="Pfam" id="PF07714">
    <property type="entry name" value="PK_Tyr_Ser-Thr"/>
    <property type="match status" value="1"/>
</dbReference>
<dbReference type="SUPFAM" id="SSF56112">
    <property type="entry name" value="Protein kinase-like (PK-like)"/>
    <property type="match status" value="1"/>
</dbReference>
<dbReference type="PROSITE" id="PS00107">
    <property type="entry name" value="PROTEIN_KINASE_ATP"/>
    <property type="match status" value="1"/>
</dbReference>
<dbReference type="PROSITE" id="PS50011">
    <property type="entry name" value="PROTEIN_KINASE_DOM"/>
    <property type="match status" value="1"/>
</dbReference>
<dbReference type="PROSITE" id="PS00108">
    <property type="entry name" value="PROTEIN_KINASE_ST"/>
    <property type="match status" value="1"/>
</dbReference>
<gene>
    <name type="primary">ALE2</name>
    <name type="ordered locus">At2g20300</name>
    <name type="ORF">F11A3.15</name>
</gene>
<accession>Q8RWW0</accession>
<accession>Q9SK72</accession>
<reference key="1">
    <citation type="journal article" date="1999" name="Nature">
        <title>Sequence and analysis of chromosome 2 of the plant Arabidopsis thaliana.</title>
        <authorList>
            <person name="Lin X."/>
            <person name="Kaul S."/>
            <person name="Rounsley S.D."/>
            <person name="Shea T.P."/>
            <person name="Benito M.-I."/>
            <person name="Town C.D."/>
            <person name="Fujii C.Y."/>
            <person name="Mason T.M."/>
            <person name="Bowman C.L."/>
            <person name="Barnstead M.E."/>
            <person name="Feldblyum T.V."/>
            <person name="Buell C.R."/>
            <person name="Ketchum K.A."/>
            <person name="Lee J.J."/>
            <person name="Ronning C.M."/>
            <person name="Koo H.L."/>
            <person name="Moffat K.S."/>
            <person name="Cronin L.A."/>
            <person name="Shen M."/>
            <person name="Pai G."/>
            <person name="Van Aken S."/>
            <person name="Umayam L."/>
            <person name="Tallon L.J."/>
            <person name="Gill J.E."/>
            <person name="Adams M.D."/>
            <person name="Carrera A.J."/>
            <person name="Creasy T.H."/>
            <person name="Goodman H.M."/>
            <person name="Somerville C.R."/>
            <person name="Copenhaver G.P."/>
            <person name="Preuss D."/>
            <person name="Nierman W.C."/>
            <person name="White O."/>
            <person name="Eisen J.A."/>
            <person name="Salzberg S.L."/>
            <person name="Fraser C.M."/>
            <person name="Venter J.C."/>
        </authorList>
    </citation>
    <scope>NUCLEOTIDE SEQUENCE [LARGE SCALE GENOMIC DNA]</scope>
    <source>
        <strain>cv. Columbia</strain>
    </source>
</reference>
<reference key="2">
    <citation type="journal article" date="2017" name="Plant J.">
        <title>Araport11: a complete reannotation of the Arabidopsis thaliana reference genome.</title>
        <authorList>
            <person name="Cheng C.Y."/>
            <person name="Krishnakumar V."/>
            <person name="Chan A.P."/>
            <person name="Thibaud-Nissen F."/>
            <person name="Schobel S."/>
            <person name="Town C.D."/>
        </authorList>
    </citation>
    <scope>GENOME REANNOTATION</scope>
    <source>
        <strain>cv. Columbia</strain>
    </source>
</reference>
<reference key="3">
    <citation type="journal article" date="2003" name="Science">
        <title>Empirical analysis of transcriptional activity in the Arabidopsis genome.</title>
        <authorList>
            <person name="Yamada K."/>
            <person name="Lim J."/>
            <person name="Dale J.M."/>
            <person name="Chen H."/>
            <person name="Shinn P."/>
            <person name="Palm C.J."/>
            <person name="Southwick A.M."/>
            <person name="Wu H.C."/>
            <person name="Kim C.J."/>
            <person name="Nguyen M."/>
            <person name="Pham P.K."/>
            <person name="Cheuk R.F."/>
            <person name="Karlin-Newmann G."/>
            <person name="Liu S.X."/>
            <person name="Lam B."/>
            <person name="Sakano H."/>
            <person name="Wu T."/>
            <person name="Yu G."/>
            <person name="Miranda M."/>
            <person name="Quach H.L."/>
            <person name="Tripp M."/>
            <person name="Chang C.H."/>
            <person name="Lee J.M."/>
            <person name="Toriumi M.J."/>
            <person name="Chan M.M."/>
            <person name="Tang C.C."/>
            <person name="Onodera C.S."/>
            <person name="Deng J.M."/>
            <person name="Akiyama K."/>
            <person name="Ansari Y."/>
            <person name="Arakawa T."/>
            <person name="Banh J."/>
            <person name="Banno F."/>
            <person name="Bowser L."/>
            <person name="Brooks S.Y."/>
            <person name="Carninci P."/>
            <person name="Chao Q."/>
            <person name="Choy N."/>
            <person name="Enju A."/>
            <person name="Goldsmith A.D."/>
            <person name="Gurjal M."/>
            <person name="Hansen N.F."/>
            <person name="Hayashizaki Y."/>
            <person name="Johnson-Hopson C."/>
            <person name="Hsuan V.W."/>
            <person name="Iida K."/>
            <person name="Karnes M."/>
            <person name="Khan S."/>
            <person name="Koesema E."/>
            <person name="Ishida J."/>
            <person name="Jiang P.X."/>
            <person name="Jones T."/>
            <person name="Kawai J."/>
            <person name="Kamiya A."/>
            <person name="Meyers C."/>
            <person name="Nakajima M."/>
            <person name="Narusaka M."/>
            <person name="Seki M."/>
            <person name="Sakurai T."/>
            <person name="Satou M."/>
            <person name="Tamse R."/>
            <person name="Vaysberg M."/>
            <person name="Wallender E.K."/>
            <person name="Wong C."/>
            <person name="Yamamura Y."/>
            <person name="Yuan S."/>
            <person name="Shinozaki K."/>
            <person name="Davis R.W."/>
            <person name="Theologis A."/>
            <person name="Ecker J.R."/>
        </authorList>
    </citation>
    <scope>NUCLEOTIDE SEQUENCE [LARGE SCALE MRNA]</scope>
    <source>
        <strain>cv. Columbia</strain>
    </source>
</reference>
<reference key="4">
    <citation type="submission" date="2006-07" db="EMBL/GenBank/DDBJ databases">
        <title>Large-scale analysis of RIKEN Arabidopsis full-length (RAFL) cDNAs.</title>
        <authorList>
            <person name="Totoki Y."/>
            <person name="Seki M."/>
            <person name="Ishida J."/>
            <person name="Nakajima M."/>
            <person name="Enju A."/>
            <person name="Kamiya A."/>
            <person name="Narusaka M."/>
            <person name="Shin-i T."/>
            <person name="Nakagawa M."/>
            <person name="Sakamoto N."/>
            <person name="Oishi K."/>
            <person name="Kohara Y."/>
            <person name="Kobayashi M."/>
            <person name="Toyoda A."/>
            <person name="Sakaki Y."/>
            <person name="Sakurai T."/>
            <person name="Iida K."/>
            <person name="Akiyama K."/>
            <person name="Satou M."/>
            <person name="Toyoda T."/>
            <person name="Konagaya A."/>
            <person name="Carninci P."/>
            <person name="Kawai J."/>
            <person name="Hayashizaki Y."/>
            <person name="Shinozaki K."/>
        </authorList>
    </citation>
    <scope>NUCLEOTIDE SEQUENCE [LARGE SCALE MRNA]</scope>
    <source>
        <strain>cv. Columbia</strain>
    </source>
</reference>
<reference key="5">
    <citation type="journal article" date="2007" name="Development">
        <title>Novel receptor-like kinase ALE2 controls shoot development by specifying epidermis in Arabidopsis.</title>
        <authorList>
            <person name="Tanaka H."/>
            <person name="Watanabe M."/>
            <person name="Sasabe M."/>
            <person name="Hiroe T."/>
            <person name="Tanaka T."/>
            <person name="Tsukaya H."/>
            <person name="Ikezaki M."/>
            <person name="Machida C."/>
            <person name="Machida Y."/>
        </authorList>
    </citation>
    <scope>FUNCTION</scope>
    <scope>DISRUPTION PHENOTYPE</scope>
    <scope>MUTAGENESIS OF LYS-377</scope>
    <scope>AUTOPHOSPHORYLATION</scope>
    <scope>PHOSPHORYLATION BY ACR4</scope>
    <scope>CATALYTIC ACTIVITY</scope>
</reference>
<keyword id="KW-0067">ATP-binding</keyword>
<keyword id="KW-1003">Cell membrane</keyword>
<keyword id="KW-0217">Developmental protein</keyword>
<keyword id="KW-0221">Differentiation</keyword>
<keyword id="KW-0325">Glycoprotein</keyword>
<keyword id="KW-0418">Kinase</keyword>
<keyword id="KW-0472">Membrane</keyword>
<keyword id="KW-0547">Nucleotide-binding</keyword>
<keyword id="KW-0597">Phosphoprotein</keyword>
<keyword id="KW-0675">Receptor</keyword>
<keyword id="KW-1185">Reference proteome</keyword>
<keyword id="KW-0723">Serine/threonine-protein kinase</keyword>
<keyword id="KW-0732">Signal</keyword>
<keyword id="KW-0808">Transferase</keyword>
<keyword id="KW-0812">Transmembrane</keyword>
<keyword id="KW-1133">Transmembrane helix</keyword>
<protein>
    <recommendedName>
        <fullName>Receptor-like serine/threonine-protein kinase ALE2</fullName>
        <ecNumber>2.7.11.1</ecNumber>
    </recommendedName>
    <alternativeName>
        <fullName>Protein ABNORMAL LEAF SHAPE 2</fullName>
    </alternativeName>
</protein>
<feature type="signal peptide" evidence="2">
    <location>
        <begin position="1"/>
        <end position="19"/>
    </location>
</feature>
<feature type="chain" id="PRO_0000403337" description="Receptor-like serine/threonine-protein kinase ALE2">
    <location>
        <begin position="20"/>
        <end position="744"/>
    </location>
</feature>
<feature type="topological domain" description="Extracellular" evidence="2">
    <location>
        <begin position="20"/>
        <end position="260"/>
    </location>
</feature>
<feature type="transmembrane region" description="Helical" evidence="2">
    <location>
        <begin position="261"/>
        <end position="281"/>
    </location>
</feature>
<feature type="topological domain" description="Cytoplasmic" evidence="2">
    <location>
        <begin position="282"/>
        <end position="744"/>
    </location>
</feature>
<feature type="domain" description="Protein kinase" evidence="3">
    <location>
        <begin position="349"/>
        <end position="619"/>
    </location>
</feature>
<feature type="region of interest" description="Disordered" evidence="5">
    <location>
        <begin position="59"/>
        <end position="79"/>
    </location>
</feature>
<feature type="region of interest" description="Disordered" evidence="5">
    <location>
        <begin position="681"/>
        <end position="705"/>
    </location>
</feature>
<feature type="region of interest" description="Disordered" evidence="5">
    <location>
        <begin position="722"/>
        <end position="744"/>
    </location>
</feature>
<feature type="compositionally biased region" description="Pro residues" evidence="5">
    <location>
        <begin position="59"/>
        <end position="68"/>
    </location>
</feature>
<feature type="compositionally biased region" description="Basic residues" evidence="5">
    <location>
        <begin position="70"/>
        <end position="79"/>
    </location>
</feature>
<feature type="active site" description="Proton acceptor" evidence="3 4">
    <location>
        <position position="470"/>
    </location>
</feature>
<feature type="binding site" evidence="3">
    <location>
        <begin position="355"/>
        <end position="363"/>
    </location>
    <ligand>
        <name>ATP</name>
        <dbReference type="ChEBI" id="CHEBI:30616"/>
    </ligand>
</feature>
<feature type="binding site" evidence="3">
    <location>
        <position position="377"/>
    </location>
    <ligand>
        <name>ATP</name>
        <dbReference type="ChEBI" id="CHEBI:30616"/>
    </ligand>
</feature>
<feature type="glycosylation site" description="N-linked (GlcNAc...) asparagine" evidence="2">
    <location>
        <position position="87"/>
    </location>
</feature>
<feature type="glycosylation site" description="N-linked (GlcNAc...) asparagine" evidence="2">
    <location>
        <position position="186"/>
    </location>
</feature>
<feature type="glycosylation site" description="N-linked (GlcNAc...) asparagine" evidence="2">
    <location>
        <position position="204"/>
    </location>
</feature>
<feature type="glycosylation site" description="N-linked (GlcNAc...) asparagine" evidence="2">
    <location>
        <position position="243"/>
    </location>
</feature>
<feature type="glycosylation site" description="N-linked (GlcNAc...) asparagine" evidence="2">
    <location>
        <position position="249"/>
    </location>
</feature>
<feature type="mutagenesis site" description="Impaired kinase activity." evidence="6">
    <original>K</original>
    <variation>W</variation>
    <location>
        <position position="377"/>
    </location>
</feature>
<sequence>MRNFAMLLLLILLLHSLASFPICFARLFPMSLPFTRSKAHQMHFFHPYLNPSVAPTPSPAFSPNPSRIPPLRHKGHHRHRRWHLRRNATAVSPSSHDCQQTCVEPLTSTPFGSPCGCVFPMKVQLLLSVAPFSIFPVTNELEIEVAAGTYLEQSQVKIMGASADSENQGKTVVDINLVPLGEKFDNTTATLIYQRFRHKKVPLNETVFGDYEVTHISYPGIPSSSPNGDVTGDAPGGLPIPINATTFANKSQGIGFRTIAIIALSGFVLILVLVGAISIIVKWKKIGKSSNAVGPALAPSINKRPGAGSMFSSSARSSGSDSLMSSMATCALSVKTFTLSELEKATDRFSAKRVLGEGGFGRVYQGSMEDGTEVAVKLLTRDNQNRDREFIAEVEMLSRLHHRNLVKLIGICIEGRTRCLIYELVHNGSVESHLHEGTLDWDARLKIALGAARGLAYLHEDSNPRVIHRDFKASNVLLEDDFTPKVSDFGLAREATEGSQHISTRVMGTFGYVAPEYAMTGHLLVKSDVYSYGVVLLELLTGRRPVDMSQPSGEENLVTWARPLLANREGLEQLVDPALAGTYNFDDMAKVAAIASMCVHQEVSHRPFMGEVVQALKLIYNDADETCGDYCSQKDSSVPDSADFKGDLAPSDSSWWNLTPRLRYGQASSFITMDYSSGPLEDMENRPHSASSIPRVGGLILPNRSGPLRPMRSRRNFFRLRGSMSEHGGPSSSRHLWSGNGDWL</sequence>